<dbReference type="EMBL" id="AJ493599">
    <property type="protein sequence ID" value="CAD42702.1"/>
    <property type="molecule type" value="mRNA"/>
</dbReference>
<dbReference type="EMBL" id="AJ493600">
    <property type="protein sequence ID" value="CAD42703.1"/>
    <property type="molecule type" value="mRNA"/>
</dbReference>
<dbReference type="EMBL" id="AJ493603">
    <property type="protein sequence ID" value="CAD42706.1"/>
    <property type="molecule type" value="mRNA"/>
</dbReference>
<dbReference type="EMBL" id="AC092055">
    <property type="status" value="NOT_ANNOTATED_CDS"/>
    <property type="molecule type" value="Genomic_DNA"/>
</dbReference>
<dbReference type="EMBL" id="AC136290">
    <property type="status" value="NOT_ANNOTATED_CDS"/>
    <property type="molecule type" value="Genomic_DNA"/>
</dbReference>
<dbReference type="EMBL" id="BC132691">
    <property type="protein sequence ID" value="AAI32692.1"/>
    <property type="molecule type" value="mRNA"/>
</dbReference>
<dbReference type="EMBL" id="BC133024">
    <property type="protein sequence ID" value="AAI33025.1"/>
    <property type="molecule type" value="mRNA"/>
</dbReference>
<dbReference type="EMBL" id="BC144376">
    <property type="protein sequence ID" value="AAI44377.1"/>
    <property type="molecule type" value="mRNA"/>
</dbReference>
<dbReference type="EMBL" id="BC144377">
    <property type="protein sequence ID" value="AAI44378.1"/>
    <property type="molecule type" value="mRNA"/>
</dbReference>
<dbReference type="RefSeq" id="NP_001289760.1">
    <property type="nucleotide sequence ID" value="NM_001302831.1"/>
</dbReference>
<dbReference type="RefSeq" id="NP_001289761.1">
    <property type="nucleotide sequence ID" value="NM_001302832.1"/>
</dbReference>
<dbReference type="RefSeq" id="NP_848029.2">
    <property type="nucleotide sequence ID" value="NM_178339.2"/>
</dbReference>
<dbReference type="RefSeq" id="NP_848032.1">
    <property type="nucleotide sequence ID" value="NM_178342.2"/>
</dbReference>
<dbReference type="RefSeq" id="NP_848034.2">
    <property type="nucleotide sequence ID" value="NM_178344.2"/>
</dbReference>
<dbReference type="RefSeq" id="XP_016861780.1">
    <property type="nucleotide sequence ID" value="XM_017006291.1"/>
</dbReference>
<dbReference type="RefSeq" id="XP_016861781.1">
    <property type="nucleotide sequence ID" value="XM_017006292.1"/>
</dbReference>
<dbReference type="RefSeq" id="XP_016861782.1">
    <property type="nucleotide sequence ID" value="XM_017006293.1"/>
</dbReference>
<dbReference type="RefSeq" id="XP_016861783.1">
    <property type="nucleotide sequence ID" value="XM_017006294.1"/>
</dbReference>
<dbReference type="RefSeq" id="XP_016861784.1">
    <property type="nucleotide sequence ID" value="XM_017006295.1"/>
</dbReference>
<dbReference type="RefSeq" id="XP_016861785.1">
    <property type="nucleotide sequence ID" value="XM_017006296.1"/>
</dbReference>
<dbReference type="BioGRID" id="130957">
    <property type="interactions" value="1"/>
</dbReference>
<dbReference type="IntAct" id="Q8IVJ8">
    <property type="interactions" value="1"/>
</dbReference>
<dbReference type="iPTMnet" id="Q8IVJ8"/>
<dbReference type="PhosphoSitePlus" id="Q8IVJ8"/>
<dbReference type="BioMuta" id="C3orf35"/>
<dbReference type="PaxDb" id="9606-ENSP00000413537"/>
<dbReference type="PeptideAtlas" id="Q8IVJ8"/>
<dbReference type="ProteomicsDB" id="70716">
    <molecule id="Q8IVJ8-1"/>
</dbReference>
<dbReference type="DNASU" id="339883"/>
<dbReference type="AGR" id="HGNC:24082"/>
<dbReference type="DisGeNET" id="339883"/>
<dbReference type="GeneCards" id="APRG1"/>
<dbReference type="HGNC" id="HGNC:24082">
    <property type="gene designation" value="APRG1"/>
</dbReference>
<dbReference type="MIM" id="611429">
    <property type="type" value="gene"/>
</dbReference>
<dbReference type="neXtProt" id="NX_Q8IVJ8"/>
<dbReference type="eggNOG" id="ENOG502RU2H">
    <property type="taxonomic scope" value="Eukaryota"/>
</dbReference>
<dbReference type="InParanoid" id="Q8IVJ8"/>
<dbReference type="PAN-GO" id="Q8IVJ8">
    <property type="GO annotations" value="0 GO annotations based on evolutionary models"/>
</dbReference>
<dbReference type="PhylomeDB" id="Q8IVJ8"/>
<dbReference type="PathwayCommons" id="Q8IVJ8"/>
<dbReference type="SignaLink" id="Q8IVJ8"/>
<dbReference type="BioGRID-ORCS" id="339883">
    <property type="hits" value="12 hits in 1125 CRISPR screens"/>
</dbReference>
<dbReference type="GenomeRNAi" id="339883"/>
<dbReference type="Pharos" id="Q8IVJ8">
    <property type="development level" value="Tdark"/>
</dbReference>
<dbReference type="PRO" id="PR:Q8IVJ8"/>
<dbReference type="Proteomes" id="UP000005640">
    <property type="component" value="Unplaced"/>
</dbReference>
<dbReference type="RNAct" id="Q8IVJ8">
    <property type="molecule type" value="protein"/>
</dbReference>
<dbReference type="GO" id="GO:0016020">
    <property type="term" value="C:membrane"/>
    <property type="evidence" value="ECO:0007669"/>
    <property type="project" value="UniProtKB-SubCell"/>
</dbReference>
<accession>Q8IVJ8</accession>
<accession>B7ZMA0</accession>
<accession>Q8IVJ5</accession>
<accession>Q8IVJ9</accession>
<keyword id="KW-0025">Alternative splicing</keyword>
<keyword id="KW-0472">Membrane</keyword>
<keyword id="KW-1185">Reference proteome</keyword>
<keyword id="KW-0812">Transmembrane</keyword>
<keyword id="KW-1133">Transmembrane helix</keyword>
<reference key="1">
    <citation type="journal article" date="2003" name="Cancer Res.">
        <title>An integrated physical and gene map of the 3.5-Mb chromosome 3p21.3 (AP20) region implicated in major human epithelial malignancies.</title>
        <authorList>
            <person name="Protopopov A."/>
            <person name="Kashuba V."/>
            <person name="Zabarovska V.I."/>
            <person name="Muravenko O.V."/>
            <person name="Lerman M.I."/>
            <person name="Klein G."/>
            <person name="Zabarovsky E.R."/>
        </authorList>
    </citation>
    <scope>NUCLEOTIDE SEQUENCE [MRNA] (ISOFORMS 1; 2 AND 3)</scope>
    <scope>TISSUE SPECIFICITY (ISOFORMS 1 AND 2)</scope>
    <source>
        <tissue>Heart</tissue>
        <tissue>Kidney</tissue>
        <tissue>Placenta</tissue>
    </source>
</reference>
<reference key="2">
    <citation type="journal article" date="2006" name="Nature">
        <title>The DNA sequence, annotation and analysis of human chromosome 3.</title>
        <authorList>
            <person name="Muzny D.M."/>
            <person name="Scherer S.E."/>
            <person name="Kaul R."/>
            <person name="Wang J."/>
            <person name="Yu J."/>
            <person name="Sudbrak R."/>
            <person name="Buhay C.J."/>
            <person name="Chen R."/>
            <person name="Cree A."/>
            <person name="Ding Y."/>
            <person name="Dugan-Rocha S."/>
            <person name="Gill R."/>
            <person name="Gunaratne P."/>
            <person name="Harris R.A."/>
            <person name="Hawes A.C."/>
            <person name="Hernandez J."/>
            <person name="Hodgson A.V."/>
            <person name="Hume J."/>
            <person name="Jackson A."/>
            <person name="Khan Z.M."/>
            <person name="Kovar-Smith C."/>
            <person name="Lewis L.R."/>
            <person name="Lozado R.J."/>
            <person name="Metzker M.L."/>
            <person name="Milosavljevic A."/>
            <person name="Miner G.R."/>
            <person name="Morgan M.B."/>
            <person name="Nazareth L.V."/>
            <person name="Scott G."/>
            <person name="Sodergren E."/>
            <person name="Song X.-Z."/>
            <person name="Steffen D."/>
            <person name="Wei S."/>
            <person name="Wheeler D.A."/>
            <person name="Wright M.W."/>
            <person name="Worley K.C."/>
            <person name="Yuan Y."/>
            <person name="Zhang Z."/>
            <person name="Adams C.Q."/>
            <person name="Ansari-Lari M.A."/>
            <person name="Ayele M."/>
            <person name="Brown M.J."/>
            <person name="Chen G."/>
            <person name="Chen Z."/>
            <person name="Clendenning J."/>
            <person name="Clerc-Blankenburg K.P."/>
            <person name="Chen R."/>
            <person name="Chen Z."/>
            <person name="Davis C."/>
            <person name="Delgado O."/>
            <person name="Dinh H.H."/>
            <person name="Dong W."/>
            <person name="Draper H."/>
            <person name="Ernst S."/>
            <person name="Fu G."/>
            <person name="Gonzalez-Garay M.L."/>
            <person name="Garcia D.K."/>
            <person name="Gillett W."/>
            <person name="Gu J."/>
            <person name="Hao B."/>
            <person name="Haugen E."/>
            <person name="Havlak P."/>
            <person name="He X."/>
            <person name="Hennig S."/>
            <person name="Hu S."/>
            <person name="Huang W."/>
            <person name="Jackson L.R."/>
            <person name="Jacob L.S."/>
            <person name="Kelly S.H."/>
            <person name="Kube M."/>
            <person name="Levy R."/>
            <person name="Li Z."/>
            <person name="Liu B."/>
            <person name="Liu J."/>
            <person name="Liu W."/>
            <person name="Lu J."/>
            <person name="Maheshwari M."/>
            <person name="Nguyen B.-V."/>
            <person name="Okwuonu G.O."/>
            <person name="Palmeiri A."/>
            <person name="Pasternak S."/>
            <person name="Perez L.M."/>
            <person name="Phelps K.A."/>
            <person name="Plopper F.J."/>
            <person name="Qiang B."/>
            <person name="Raymond C."/>
            <person name="Rodriguez R."/>
            <person name="Saenphimmachak C."/>
            <person name="Santibanez J."/>
            <person name="Shen H."/>
            <person name="Shen Y."/>
            <person name="Subramanian S."/>
            <person name="Tabor P.E."/>
            <person name="Verduzco D."/>
            <person name="Waldron L."/>
            <person name="Wang J."/>
            <person name="Wang J."/>
            <person name="Wang Q."/>
            <person name="Williams G.A."/>
            <person name="Wong G.K.-S."/>
            <person name="Yao Z."/>
            <person name="Zhang J."/>
            <person name="Zhang X."/>
            <person name="Zhao G."/>
            <person name="Zhou J."/>
            <person name="Zhou Y."/>
            <person name="Nelson D."/>
            <person name="Lehrach H."/>
            <person name="Reinhardt R."/>
            <person name="Naylor S.L."/>
            <person name="Yang H."/>
            <person name="Olson M."/>
            <person name="Weinstock G."/>
            <person name="Gibbs R.A."/>
        </authorList>
    </citation>
    <scope>NUCLEOTIDE SEQUENCE [LARGE SCALE GENOMIC DNA]</scope>
</reference>
<reference key="3">
    <citation type="journal article" date="2004" name="Genome Res.">
        <title>The status, quality, and expansion of the NIH full-length cDNA project: the Mammalian Gene Collection (MGC).</title>
        <authorList>
            <consortium name="The MGC Project Team"/>
        </authorList>
    </citation>
    <scope>NUCLEOTIDE SEQUENCE [LARGE SCALE MRNA] (ISOFORM 3)</scope>
    <source>
        <tissue>Brain</tissue>
    </source>
</reference>
<reference key="4">
    <citation type="journal article" date="2005" name="Breast Cancer Res. Treat.">
        <title>Evidence for a tumour suppressive function of APRG1 in breast cancer.</title>
        <authorList>
            <person name="Leris A.C."/>
            <person name="Roberts T.R."/>
            <person name="Jiang W.G."/>
            <person name="Newbold R.F."/>
            <person name="Mokbel K."/>
        </authorList>
    </citation>
    <scope>INDUCTION (ISOFORM 1)</scope>
</reference>
<evidence type="ECO:0000255" key="1"/>
<evidence type="ECO:0000269" key="2">
    <source>
    </source>
</evidence>
<evidence type="ECO:0000269" key="3">
    <source>
    </source>
</evidence>
<evidence type="ECO:0000303" key="4">
    <source>
    </source>
</evidence>
<evidence type="ECO:0000303" key="5">
    <source>
    </source>
</evidence>
<evidence type="ECO:0000305" key="6"/>
<evidence type="ECO:0000312" key="7">
    <source>
        <dbReference type="HGNC" id="HGNC:24082"/>
    </source>
</evidence>
<proteinExistence type="evidence at transcript level"/>
<protein>
    <recommendedName>
        <fullName evidence="7">APRG1 tumor suppressor candidate</fullName>
    </recommendedName>
    <alternativeName>
        <fullName evidence="4">AP20 region protein 1</fullName>
    </alternativeName>
</protein>
<gene>
    <name evidence="7" type="primary">APRG1</name>
    <name type="synonym">C3orf35</name>
</gene>
<comment type="subcellular location">
    <subcellularLocation>
        <location evidence="6">Membrane</location>
        <topology evidence="6">Single-pass membrane protein</topology>
    </subcellularLocation>
</comment>
<comment type="alternative products">
    <event type="alternative splicing"/>
    <isoform>
        <id>Q8IVJ8-1</id>
        <name>1</name>
        <name evidence="4">B</name>
        <sequence type="displayed"/>
    </isoform>
    <isoform>
        <id>Q8IVJ8-2</id>
        <name>2</name>
        <name evidence="4">A</name>
        <sequence type="described" ref="VSP_025845"/>
    </isoform>
    <isoform>
        <id>Q8IVJ8-3</id>
        <name>3</name>
        <name evidence="4">E</name>
        <sequence type="described" ref="VSP_025846"/>
    </isoform>
    <text>Additional isoforms seem to exist.</text>
</comment>
<comment type="tissue specificity">
    <molecule>Isoform 1</molecule>
    <text evidence="2">Expressed at high levels in the pancreas and placenta.</text>
</comment>
<comment type="tissue specificity">
    <molecule>Isoform 2</molecule>
    <text evidence="2">Expressed at high levels in the kidney.</text>
</comment>
<comment type="induction">
    <molecule>Isoform 1</molecule>
    <text evidence="3">Expression is lower in malignant breast tissue than in normal tissue.</text>
</comment>
<name>APRG1_HUMAN</name>
<organism>
    <name type="scientific">Homo sapiens</name>
    <name type="common">Human</name>
    <dbReference type="NCBI Taxonomy" id="9606"/>
    <lineage>
        <taxon>Eukaryota</taxon>
        <taxon>Metazoa</taxon>
        <taxon>Chordata</taxon>
        <taxon>Craniata</taxon>
        <taxon>Vertebrata</taxon>
        <taxon>Euteleostomi</taxon>
        <taxon>Mammalia</taxon>
        <taxon>Eutheria</taxon>
        <taxon>Euarchontoglires</taxon>
        <taxon>Primates</taxon>
        <taxon>Haplorrhini</taxon>
        <taxon>Catarrhini</taxon>
        <taxon>Hominidae</taxon>
        <taxon>Homo</taxon>
    </lineage>
</organism>
<feature type="chain" id="PRO_0000288935" description="APRG1 tumor suppressor candidate">
    <location>
        <begin position="1"/>
        <end position="170"/>
    </location>
</feature>
<feature type="transmembrane region" description="Helical" evidence="1">
    <location>
        <begin position="150"/>
        <end position="170"/>
    </location>
</feature>
<feature type="splice variant" id="VSP_025846" description="In isoform 3." evidence="4 5">
    <original>KKTEVQKREGTDSIPAAGRSGTANQPSIAPHRCLFSRGITALDGLKRGRGCNGAAHLVRGDAWKTKLGEPWVSIALALAGPGAILILELSWFLG</original>
    <variation>DCMLVSLAKNKVNVFGAIINMAASVSGVIGGLKFSRTYYVKGI</variation>
    <location>
        <begin position="77"/>
        <end position="170"/>
    </location>
</feature>
<feature type="splice variant" id="VSP_025845" description="In isoform 2." evidence="4">
    <location>
        <begin position="79"/>
        <end position="170"/>
    </location>
</feature>
<feature type="sequence variant" id="VAR_032538" description="In dbSNP:rs17266511.">
    <original>H</original>
    <variation>Y</variation>
    <location>
        <position position="107"/>
    </location>
</feature>
<feature type="sequence conflict" description="In Ref. 1; CAD42703." evidence="6" ref="1">
    <original>I</original>
    <variation>V</variation>
    <location>
        <position position="104"/>
    </location>
</feature>
<feature type="sequence conflict" description="In Ref. 1; CAD42703." evidence="6" ref="1">
    <original>A</original>
    <variation>S</variation>
    <location>
        <position position="131"/>
    </location>
</feature>
<sequence>MKTMATRKRCKLSRTGPEFENVIKRLLCARTFHTRIGGDLTHGIINRGRRANAEQMGLQGSAQHFNIFPLDLWTQGKKTEVQKREGTDSIPAAGRSGTANQPSIAPHRCLFSRGITALDGLKRGRGCNGAAHLVRGDAWKTKLGEPWVSIALALAGPGAILILELSWFLG</sequence>